<keyword id="KW-0004">4Fe-4S</keyword>
<keyword id="KW-0408">Iron</keyword>
<keyword id="KW-0411">Iron-sulfur</keyword>
<keyword id="KW-0414">Isoprene biosynthesis</keyword>
<keyword id="KW-0479">Metal-binding</keyword>
<keyword id="KW-0560">Oxidoreductase</keyword>
<keyword id="KW-1185">Reference proteome</keyword>
<comment type="function">
    <text evidence="1">Catalyzes the conversion of 1-hydroxy-2-methyl-2-(E)-butenyl 4-diphosphate (HMBPP) into a mixture of isopentenyl diphosphate (IPP) and dimethylallyl diphosphate (DMAPP). Acts in the terminal step of the DOXP/MEP pathway for isoprenoid precursor biosynthesis.</text>
</comment>
<comment type="catalytic activity">
    <reaction evidence="1">
        <text>isopentenyl diphosphate + 2 oxidized [2Fe-2S]-[ferredoxin] + H2O = (2E)-4-hydroxy-3-methylbut-2-enyl diphosphate + 2 reduced [2Fe-2S]-[ferredoxin] + 2 H(+)</text>
        <dbReference type="Rhea" id="RHEA:24488"/>
        <dbReference type="Rhea" id="RHEA-COMP:10000"/>
        <dbReference type="Rhea" id="RHEA-COMP:10001"/>
        <dbReference type="ChEBI" id="CHEBI:15377"/>
        <dbReference type="ChEBI" id="CHEBI:15378"/>
        <dbReference type="ChEBI" id="CHEBI:33737"/>
        <dbReference type="ChEBI" id="CHEBI:33738"/>
        <dbReference type="ChEBI" id="CHEBI:128753"/>
        <dbReference type="ChEBI" id="CHEBI:128769"/>
        <dbReference type="EC" id="1.17.7.4"/>
    </reaction>
</comment>
<comment type="catalytic activity">
    <reaction evidence="1">
        <text>dimethylallyl diphosphate + 2 oxidized [2Fe-2S]-[ferredoxin] + H2O = (2E)-4-hydroxy-3-methylbut-2-enyl diphosphate + 2 reduced [2Fe-2S]-[ferredoxin] + 2 H(+)</text>
        <dbReference type="Rhea" id="RHEA:24825"/>
        <dbReference type="Rhea" id="RHEA-COMP:10000"/>
        <dbReference type="Rhea" id="RHEA-COMP:10001"/>
        <dbReference type="ChEBI" id="CHEBI:15377"/>
        <dbReference type="ChEBI" id="CHEBI:15378"/>
        <dbReference type="ChEBI" id="CHEBI:33737"/>
        <dbReference type="ChEBI" id="CHEBI:33738"/>
        <dbReference type="ChEBI" id="CHEBI:57623"/>
        <dbReference type="ChEBI" id="CHEBI:128753"/>
        <dbReference type="EC" id="1.17.7.4"/>
    </reaction>
</comment>
<comment type="cofactor">
    <cofactor evidence="1">
        <name>[4Fe-4S] cluster</name>
        <dbReference type="ChEBI" id="CHEBI:49883"/>
    </cofactor>
    <text evidence="1">Binds 1 [4Fe-4S] cluster per subunit.</text>
</comment>
<comment type="pathway">
    <text evidence="1">Isoprenoid biosynthesis; dimethylallyl diphosphate biosynthesis; dimethylallyl diphosphate from (2E)-4-hydroxy-3-methylbutenyl diphosphate: step 1/1.</text>
</comment>
<comment type="pathway">
    <text evidence="1">Isoprenoid biosynthesis; isopentenyl diphosphate biosynthesis via DXP pathway; isopentenyl diphosphate from 1-deoxy-D-xylulose 5-phosphate: step 6/6.</text>
</comment>
<comment type="similarity">
    <text evidence="1">Belongs to the IspH family.</text>
</comment>
<reference key="1">
    <citation type="journal article" date="1997" name="Nature">
        <title>The complete genome sequence of the gastric pathogen Helicobacter pylori.</title>
        <authorList>
            <person name="Tomb J.-F."/>
            <person name="White O."/>
            <person name="Kerlavage A.R."/>
            <person name="Clayton R.A."/>
            <person name="Sutton G.G."/>
            <person name="Fleischmann R.D."/>
            <person name="Ketchum K.A."/>
            <person name="Klenk H.-P."/>
            <person name="Gill S.R."/>
            <person name="Dougherty B.A."/>
            <person name="Nelson K.E."/>
            <person name="Quackenbush J."/>
            <person name="Zhou L."/>
            <person name="Kirkness E.F."/>
            <person name="Peterson S.N."/>
            <person name="Loftus B.J."/>
            <person name="Richardson D.L."/>
            <person name="Dodson R.J."/>
            <person name="Khalak H.G."/>
            <person name="Glodek A."/>
            <person name="McKenney K."/>
            <person name="FitzGerald L.M."/>
            <person name="Lee N."/>
            <person name="Adams M.D."/>
            <person name="Hickey E.K."/>
            <person name="Berg D.E."/>
            <person name="Gocayne J.D."/>
            <person name="Utterback T.R."/>
            <person name="Peterson J.D."/>
            <person name="Kelley J.M."/>
            <person name="Cotton M.D."/>
            <person name="Weidman J.F."/>
            <person name="Fujii C."/>
            <person name="Bowman C."/>
            <person name="Watthey L."/>
            <person name="Wallin E."/>
            <person name="Hayes W.S."/>
            <person name="Borodovsky M."/>
            <person name="Karp P.D."/>
            <person name="Smith H.O."/>
            <person name="Fraser C.M."/>
            <person name="Venter J.C."/>
        </authorList>
    </citation>
    <scope>NUCLEOTIDE SEQUENCE [LARGE SCALE GENOMIC DNA]</scope>
    <source>
        <strain>ATCC 700392 / 26695</strain>
    </source>
</reference>
<dbReference type="EC" id="1.17.7.4" evidence="1"/>
<dbReference type="EMBL" id="AE000511">
    <property type="protein sequence ID" value="AAD07469.1"/>
    <property type="molecule type" value="Genomic_DNA"/>
</dbReference>
<dbReference type="PIR" id="H64569">
    <property type="entry name" value="H64569"/>
</dbReference>
<dbReference type="RefSeq" id="NP_207198.1">
    <property type="nucleotide sequence ID" value="NC_000915.1"/>
</dbReference>
<dbReference type="RefSeq" id="WP_000403575.1">
    <property type="nucleotide sequence ID" value="NC_018939.1"/>
</dbReference>
<dbReference type="SMR" id="P65185"/>
<dbReference type="FunCoup" id="P65185">
    <property type="interactions" value="320"/>
</dbReference>
<dbReference type="IntAct" id="P65185">
    <property type="interactions" value="2"/>
</dbReference>
<dbReference type="MINT" id="P65185"/>
<dbReference type="STRING" id="85962.HP_0400"/>
<dbReference type="PaxDb" id="85962-C694_02030"/>
<dbReference type="EnsemblBacteria" id="AAD07469">
    <property type="protein sequence ID" value="AAD07469"/>
    <property type="gene ID" value="HP_0400"/>
</dbReference>
<dbReference type="KEGG" id="heo:C694_02030"/>
<dbReference type="KEGG" id="hpy:HP_0400"/>
<dbReference type="PATRIC" id="fig|85962.47.peg.424"/>
<dbReference type="eggNOG" id="COG0761">
    <property type="taxonomic scope" value="Bacteria"/>
</dbReference>
<dbReference type="InParanoid" id="P65185"/>
<dbReference type="OrthoDB" id="9804068at2"/>
<dbReference type="PhylomeDB" id="P65185"/>
<dbReference type="UniPathway" id="UPA00056">
    <property type="reaction ID" value="UER00097"/>
</dbReference>
<dbReference type="UniPathway" id="UPA00059">
    <property type="reaction ID" value="UER00105"/>
</dbReference>
<dbReference type="Proteomes" id="UP000000429">
    <property type="component" value="Chromosome"/>
</dbReference>
<dbReference type="GO" id="GO:0005829">
    <property type="term" value="C:cytosol"/>
    <property type="evidence" value="ECO:0000318"/>
    <property type="project" value="GO_Central"/>
</dbReference>
<dbReference type="GO" id="GO:0051539">
    <property type="term" value="F:4 iron, 4 sulfur cluster binding"/>
    <property type="evidence" value="ECO:0007669"/>
    <property type="project" value="UniProtKB-UniRule"/>
</dbReference>
<dbReference type="GO" id="GO:0051745">
    <property type="term" value="F:4-hydroxy-3-methylbut-2-enyl diphosphate reductase activity"/>
    <property type="evidence" value="ECO:0000318"/>
    <property type="project" value="GO_Central"/>
</dbReference>
<dbReference type="GO" id="GO:0046872">
    <property type="term" value="F:metal ion binding"/>
    <property type="evidence" value="ECO:0007669"/>
    <property type="project" value="UniProtKB-KW"/>
</dbReference>
<dbReference type="GO" id="GO:0050992">
    <property type="term" value="P:dimethylallyl diphosphate biosynthetic process"/>
    <property type="evidence" value="ECO:0007669"/>
    <property type="project" value="UniProtKB-UniRule"/>
</dbReference>
<dbReference type="GO" id="GO:0019288">
    <property type="term" value="P:isopentenyl diphosphate biosynthetic process, methylerythritol 4-phosphate pathway"/>
    <property type="evidence" value="ECO:0000318"/>
    <property type="project" value="GO_Central"/>
</dbReference>
<dbReference type="GO" id="GO:0016114">
    <property type="term" value="P:terpenoid biosynthetic process"/>
    <property type="evidence" value="ECO:0007669"/>
    <property type="project" value="UniProtKB-UniRule"/>
</dbReference>
<dbReference type="CDD" id="cd13944">
    <property type="entry name" value="lytB_ispH"/>
    <property type="match status" value="1"/>
</dbReference>
<dbReference type="Gene3D" id="3.40.50.11270">
    <property type="match status" value="1"/>
</dbReference>
<dbReference type="Gene3D" id="3.40.1010.20">
    <property type="entry name" value="4-hydroxy-3-methylbut-2-enyl diphosphate reductase, catalytic domain"/>
    <property type="match status" value="2"/>
</dbReference>
<dbReference type="HAMAP" id="MF_00191">
    <property type="entry name" value="IspH"/>
    <property type="match status" value="1"/>
</dbReference>
<dbReference type="InterPro" id="IPR003451">
    <property type="entry name" value="LytB/IspH"/>
</dbReference>
<dbReference type="NCBIfam" id="TIGR00216">
    <property type="entry name" value="ispH_lytB"/>
    <property type="match status" value="1"/>
</dbReference>
<dbReference type="NCBIfam" id="NF002187">
    <property type="entry name" value="PRK01045.1-1"/>
    <property type="match status" value="1"/>
</dbReference>
<dbReference type="PANTHER" id="PTHR30426">
    <property type="entry name" value="4-HYDROXY-3-METHYLBUT-2-ENYL DIPHOSPHATE REDUCTASE"/>
    <property type="match status" value="1"/>
</dbReference>
<dbReference type="PANTHER" id="PTHR30426:SF0">
    <property type="entry name" value="4-HYDROXY-3-METHYLBUT-2-ENYL DIPHOSPHATE REDUCTASE"/>
    <property type="match status" value="1"/>
</dbReference>
<dbReference type="Pfam" id="PF02401">
    <property type="entry name" value="LYTB"/>
    <property type="match status" value="1"/>
</dbReference>
<protein>
    <recommendedName>
        <fullName evidence="1">4-hydroxy-3-methylbut-2-enyl diphosphate reductase</fullName>
        <shortName evidence="1">HMBPP reductase</shortName>
        <ecNumber evidence="1">1.17.7.4</ecNumber>
    </recommendedName>
</protein>
<feature type="chain" id="PRO_0000128826" description="4-hydroxy-3-methylbut-2-enyl diphosphate reductase">
    <location>
        <begin position="1"/>
        <end position="274"/>
    </location>
</feature>
<feature type="active site" description="Proton donor" evidence="1">
    <location>
        <position position="122"/>
    </location>
</feature>
<feature type="binding site" evidence="1">
    <location>
        <position position="12"/>
    </location>
    <ligand>
        <name>[4Fe-4S] cluster</name>
        <dbReference type="ChEBI" id="CHEBI:49883"/>
    </ligand>
</feature>
<feature type="binding site" evidence="1">
    <location>
        <position position="36"/>
    </location>
    <ligand>
        <name>(2E)-4-hydroxy-3-methylbut-2-enyl diphosphate</name>
        <dbReference type="ChEBI" id="CHEBI:128753"/>
    </ligand>
</feature>
<feature type="binding site" evidence="1">
    <location>
        <position position="36"/>
    </location>
    <ligand>
        <name>dimethylallyl diphosphate</name>
        <dbReference type="ChEBI" id="CHEBI:57623"/>
    </ligand>
</feature>
<feature type="binding site" evidence="1">
    <location>
        <position position="36"/>
    </location>
    <ligand>
        <name>isopentenyl diphosphate</name>
        <dbReference type="ChEBI" id="CHEBI:128769"/>
    </ligand>
</feature>
<feature type="binding site" evidence="1">
    <location>
        <position position="70"/>
    </location>
    <ligand>
        <name>(2E)-4-hydroxy-3-methylbut-2-enyl diphosphate</name>
        <dbReference type="ChEBI" id="CHEBI:128753"/>
    </ligand>
</feature>
<feature type="binding site" evidence="1">
    <location>
        <position position="70"/>
    </location>
    <ligand>
        <name>dimethylallyl diphosphate</name>
        <dbReference type="ChEBI" id="CHEBI:57623"/>
    </ligand>
</feature>
<feature type="binding site" evidence="1">
    <location>
        <position position="70"/>
    </location>
    <ligand>
        <name>isopentenyl diphosphate</name>
        <dbReference type="ChEBI" id="CHEBI:128769"/>
    </ligand>
</feature>
<feature type="binding site" evidence="1">
    <location>
        <position position="92"/>
    </location>
    <ligand>
        <name>[4Fe-4S] cluster</name>
        <dbReference type="ChEBI" id="CHEBI:49883"/>
    </ligand>
</feature>
<feature type="binding site" evidence="1">
    <location>
        <position position="120"/>
    </location>
    <ligand>
        <name>(2E)-4-hydroxy-3-methylbut-2-enyl diphosphate</name>
        <dbReference type="ChEBI" id="CHEBI:128753"/>
    </ligand>
</feature>
<feature type="binding site" evidence="1">
    <location>
        <position position="120"/>
    </location>
    <ligand>
        <name>dimethylallyl diphosphate</name>
        <dbReference type="ChEBI" id="CHEBI:57623"/>
    </ligand>
</feature>
<feature type="binding site" evidence="1">
    <location>
        <position position="120"/>
    </location>
    <ligand>
        <name>isopentenyl diphosphate</name>
        <dbReference type="ChEBI" id="CHEBI:128769"/>
    </ligand>
</feature>
<feature type="binding site" evidence="1">
    <location>
        <position position="158"/>
    </location>
    <ligand>
        <name>(2E)-4-hydroxy-3-methylbut-2-enyl diphosphate</name>
        <dbReference type="ChEBI" id="CHEBI:128753"/>
    </ligand>
</feature>
<feature type="binding site" evidence="1">
    <location>
        <position position="186"/>
    </location>
    <ligand>
        <name>[4Fe-4S] cluster</name>
        <dbReference type="ChEBI" id="CHEBI:49883"/>
    </ligand>
</feature>
<feature type="binding site" evidence="1">
    <location>
        <position position="214"/>
    </location>
    <ligand>
        <name>(2E)-4-hydroxy-3-methylbut-2-enyl diphosphate</name>
        <dbReference type="ChEBI" id="CHEBI:128753"/>
    </ligand>
</feature>
<feature type="binding site" evidence="1">
    <location>
        <position position="214"/>
    </location>
    <ligand>
        <name>dimethylallyl diphosphate</name>
        <dbReference type="ChEBI" id="CHEBI:57623"/>
    </ligand>
</feature>
<feature type="binding site" evidence="1">
    <location>
        <position position="214"/>
    </location>
    <ligand>
        <name>isopentenyl diphosphate</name>
        <dbReference type="ChEBI" id="CHEBI:128769"/>
    </ligand>
</feature>
<feature type="binding site" evidence="1">
    <location>
        <position position="215"/>
    </location>
    <ligand>
        <name>(2E)-4-hydroxy-3-methylbut-2-enyl diphosphate</name>
        <dbReference type="ChEBI" id="CHEBI:128753"/>
    </ligand>
</feature>
<feature type="binding site" evidence="1">
    <location>
        <position position="215"/>
    </location>
    <ligand>
        <name>dimethylallyl diphosphate</name>
        <dbReference type="ChEBI" id="CHEBI:57623"/>
    </ligand>
</feature>
<feature type="binding site" evidence="1">
    <location>
        <position position="215"/>
    </location>
    <ligand>
        <name>isopentenyl diphosphate</name>
        <dbReference type="ChEBI" id="CHEBI:128769"/>
    </ligand>
</feature>
<feature type="binding site" evidence="1">
    <location>
        <position position="216"/>
    </location>
    <ligand>
        <name>(2E)-4-hydroxy-3-methylbut-2-enyl diphosphate</name>
        <dbReference type="ChEBI" id="CHEBI:128753"/>
    </ligand>
</feature>
<feature type="binding site" evidence="1">
    <location>
        <position position="216"/>
    </location>
    <ligand>
        <name>dimethylallyl diphosphate</name>
        <dbReference type="ChEBI" id="CHEBI:57623"/>
    </ligand>
</feature>
<feature type="binding site" evidence="1">
    <location>
        <position position="216"/>
    </location>
    <ligand>
        <name>isopentenyl diphosphate</name>
        <dbReference type="ChEBI" id="CHEBI:128769"/>
    </ligand>
</feature>
<feature type="binding site" evidence="1">
    <location>
        <position position="258"/>
    </location>
    <ligand>
        <name>(2E)-4-hydroxy-3-methylbut-2-enyl diphosphate</name>
        <dbReference type="ChEBI" id="CHEBI:128753"/>
    </ligand>
</feature>
<feature type="binding site" evidence="1">
    <location>
        <position position="258"/>
    </location>
    <ligand>
        <name>dimethylallyl diphosphate</name>
        <dbReference type="ChEBI" id="CHEBI:57623"/>
    </ligand>
</feature>
<feature type="binding site" evidence="1">
    <location>
        <position position="258"/>
    </location>
    <ligand>
        <name>isopentenyl diphosphate</name>
        <dbReference type="ChEBI" id="CHEBI:128769"/>
    </ligand>
</feature>
<accession>P65185</accession>
<accession>O25160</accession>
<proteinExistence type="inferred from homology"/>
<sequence length="274" mass="30917">MEIKMAKDYGFCFGVKRAIQIAEKNQNSLIFGSLIHNAKEINRLEKNFNVKIEEDPKKIPKNKSVIIRTHGIPKQDLEYLKNKGVKITDATCPYVIKPQQIVESMSKEGYQIVLFGDINHPEVKGVISYATNQALVVNSLEELQEKKLQRKVALVSQTTKQTPKLLQIASYLVERCTEVRIFNTICNATSYNQKAALDLSKEVDIMIVVGGKTSSNTKQLLSIAKQHCKDSYLVEDENELELAWFKDKKLCGITAGASTPDWIIENVKQKISTI</sequence>
<name>ISPH_HELPY</name>
<evidence type="ECO:0000255" key="1">
    <source>
        <dbReference type="HAMAP-Rule" id="MF_00191"/>
    </source>
</evidence>
<gene>
    <name evidence="1" type="primary">ispH</name>
    <name type="synonym">lytB</name>
    <name type="ordered locus">HP_0400</name>
</gene>
<organism>
    <name type="scientific">Helicobacter pylori (strain ATCC 700392 / 26695)</name>
    <name type="common">Campylobacter pylori</name>
    <dbReference type="NCBI Taxonomy" id="85962"/>
    <lineage>
        <taxon>Bacteria</taxon>
        <taxon>Pseudomonadati</taxon>
        <taxon>Campylobacterota</taxon>
        <taxon>Epsilonproteobacteria</taxon>
        <taxon>Campylobacterales</taxon>
        <taxon>Helicobacteraceae</taxon>
        <taxon>Helicobacter</taxon>
    </lineage>
</organism>